<reference key="1">
    <citation type="journal article" date="2002" name="Science">
        <title>50 million years of genomic stasis in endosymbiotic bacteria.</title>
        <authorList>
            <person name="Tamas I."/>
            <person name="Klasson L."/>
            <person name="Canbaeck B."/>
            <person name="Naeslund A.K."/>
            <person name="Eriksson A.-S."/>
            <person name="Wernegreen J.J."/>
            <person name="Sandstroem J.P."/>
            <person name="Moran N.A."/>
            <person name="Andersson S.G.E."/>
        </authorList>
    </citation>
    <scope>NUCLEOTIDE SEQUENCE [LARGE SCALE GENOMIC DNA]</scope>
    <source>
        <strain>Sg</strain>
    </source>
</reference>
<organism>
    <name type="scientific">Buchnera aphidicola subsp. Schizaphis graminum (strain Sg)</name>
    <dbReference type="NCBI Taxonomy" id="198804"/>
    <lineage>
        <taxon>Bacteria</taxon>
        <taxon>Pseudomonadati</taxon>
        <taxon>Pseudomonadota</taxon>
        <taxon>Gammaproteobacteria</taxon>
        <taxon>Enterobacterales</taxon>
        <taxon>Erwiniaceae</taxon>
        <taxon>Buchnera</taxon>
    </lineage>
</organism>
<accession>Q8K9P3</accession>
<proteinExistence type="inferred from homology"/>
<gene>
    <name evidence="1" type="primary">hisS</name>
    <name type="ordered locus">BUsg_277</name>
</gene>
<name>SYH_BUCAP</name>
<dbReference type="EC" id="6.1.1.21" evidence="1"/>
<dbReference type="EMBL" id="AE013218">
    <property type="protein sequence ID" value="AAM67835.1"/>
    <property type="molecule type" value="Genomic_DNA"/>
</dbReference>
<dbReference type="RefSeq" id="WP_011053802.1">
    <property type="nucleotide sequence ID" value="NC_004061.1"/>
</dbReference>
<dbReference type="SMR" id="Q8K9P3"/>
<dbReference type="STRING" id="198804.BUsg_277"/>
<dbReference type="GeneID" id="93003747"/>
<dbReference type="KEGG" id="bas:BUsg_277"/>
<dbReference type="eggNOG" id="COG0124">
    <property type="taxonomic scope" value="Bacteria"/>
</dbReference>
<dbReference type="HOGENOM" id="CLU_025113_1_1_6"/>
<dbReference type="Proteomes" id="UP000000416">
    <property type="component" value="Chromosome"/>
</dbReference>
<dbReference type="GO" id="GO:0005737">
    <property type="term" value="C:cytoplasm"/>
    <property type="evidence" value="ECO:0007669"/>
    <property type="project" value="UniProtKB-SubCell"/>
</dbReference>
<dbReference type="GO" id="GO:0005524">
    <property type="term" value="F:ATP binding"/>
    <property type="evidence" value="ECO:0007669"/>
    <property type="project" value="UniProtKB-UniRule"/>
</dbReference>
<dbReference type="GO" id="GO:0004821">
    <property type="term" value="F:histidine-tRNA ligase activity"/>
    <property type="evidence" value="ECO:0007669"/>
    <property type="project" value="UniProtKB-UniRule"/>
</dbReference>
<dbReference type="GO" id="GO:0006427">
    <property type="term" value="P:histidyl-tRNA aminoacylation"/>
    <property type="evidence" value="ECO:0007669"/>
    <property type="project" value="UniProtKB-UniRule"/>
</dbReference>
<dbReference type="CDD" id="cd00773">
    <property type="entry name" value="HisRS-like_core"/>
    <property type="match status" value="1"/>
</dbReference>
<dbReference type="FunFam" id="3.30.930.10:FF:000005">
    <property type="entry name" value="Histidine--tRNA ligase"/>
    <property type="match status" value="1"/>
</dbReference>
<dbReference type="Gene3D" id="3.40.50.800">
    <property type="entry name" value="Anticodon-binding domain"/>
    <property type="match status" value="1"/>
</dbReference>
<dbReference type="Gene3D" id="3.30.930.10">
    <property type="entry name" value="Bira Bifunctional Protein, Domain 2"/>
    <property type="match status" value="1"/>
</dbReference>
<dbReference type="HAMAP" id="MF_00127">
    <property type="entry name" value="His_tRNA_synth"/>
    <property type="match status" value="1"/>
</dbReference>
<dbReference type="InterPro" id="IPR006195">
    <property type="entry name" value="aa-tRNA-synth_II"/>
</dbReference>
<dbReference type="InterPro" id="IPR045864">
    <property type="entry name" value="aa-tRNA-synth_II/BPL/LPL"/>
</dbReference>
<dbReference type="InterPro" id="IPR036621">
    <property type="entry name" value="Anticodon-bd_dom_sf"/>
</dbReference>
<dbReference type="InterPro" id="IPR015807">
    <property type="entry name" value="His-tRNA-ligase"/>
</dbReference>
<dbReference type="InterPro" id="IPR041715">
    <property type="entry name" value="HisRS-like_core"/>
</dbReference>
<dbReference type="InterPro" id="IPR004516">
    <property type="entry name" value="HisRS/HisZ"/>
</dbReference>
<dbReference type="NCBIfam" id="TIGR00442">
    <property type="entry name" value="hisS"/>
    <property type="match status" value="1"/>
</dbReference>
<dbReference type="PANTHER" id="PTHR43707:SF1">
    <property type="entry name" value="HISTIDINE--TRNA LIGASE, MITOCHONDRIAL-RELATED"/>
    <property type="match status" value="1"/>
</dbReference>
<dbReference type="PANTHER" id="PTHR43707">
    <property type="entry name" value="HISTIDYL-TRNA SYNTHETASE"/>
    <property type="match status" value="1"/>
</dbReference>
<dbReference type="Pfam" id="PF13393">
    <property type="entry name" value="tRNA-synt_His"/>
    <property type="match status" value="1"/>
</dbReference>
<dbReference type="PIRSF" id="PIRSF001549">
    <property type="entry name" value="His-tRNA_synth"/>
    <property type="match status" value="1"/>
</dbReference>
<dbReference type="SUPFAM" id="SSF52954">
    <property type="entry name" value="Class II aaRS ABD-related"/>
    <property type="match status" value="1"/>
</dbReference>
<dbReference type="SUPFAM" id="SSF55681">
    <property type="entry name" value="Class II aaRS and biotin synthetases"/>
    <property type="match status" value="1"/>
</dbReference>
<dbReference type="PROSITE" id="PS50862">
    <property type="entry name" value="AA_TRNA_LIGASE_II"/>
    <property type="match status" value="1"/>
</dbReference>
<evidence type="ECO:0000255" key="1">
    <source>
        <dbReference type="HAMAP-Rule" id="MF_00127"/>
    </source>
</evidence>
<sequence>MNKKINSVRGMHDYLPEELKIWKKIENIIQKILTSYCYEEIRLPILEKTKIFQRAIGNITDVVEKEMYSFKDKKGNSLTLRPEGTVGCVRAIIENNLLFQKKQRFWYLGPMFRYERPQKGRYRQFYQLGVEVFGLNTPDIDLEIILLISRLWKCLGINLHIKLEINSIGSKLDRIKYQKELVFFLEKYKNILDEDSKKRLYTNPFRILDSKNDMMQKILKKAPLLKNYINTSAINHFNSLCNMMDSYGIKYIHNQNLVRGLDYYNSTVFEWKIDQIGSQNTICAGGRYDSLVQELGGNKTSAIGFAIGIERLVLLIKSLNIISCKEEDINIYIIFIGELNKIYAISLSEEIRNIYPKLKIFVDFMTCSLSKKIKNAVDSLAHIAILIGANEIKKNCFLLKDLKRGREYFFSKSELILKIKKIFYKQGN</sequence>
<comment type="catalytic activity">
    <reaction evidence="1">
        <text>tRNA(His) + L-histidine + ATP = L-histidyl-tRNA(His) + AMP + diphosphate + H(+)</text>
        <dbReference type="Rhea" id="RHEA:17313"/>
        <dbReference type="Rhea" id="RHEA-COMP:9665"/>
        <dbReference type="Rhea" id="RHEA-COMP:9689"/>
        <dbReference type="ChEBI" id="CHEBI:15378"/>
        <dbReference type="ChEBI" id="CHEBI:30616"/>
        <dbReference type="ChEBI" id="CHEBI:33019"/>
        <dbReference type="ChEBI" id="CHEBI:57595"/>
        <dbReference type="ChEBI" id="CHEBI:78442"/>
        <dbReference type="ChEBI" id="CHEBI:78527"/>
        <dbReference type="ChEBI" id="CHEBI:456215"/>
        <dbReference type="EC" id="6.1.1.21"/>
    </reaction>
</comment>
<comment type="subunit">
    <text evidence="1">Homodimer.</text>
</comment>
<comment type="subcellular location">
    <subcellularLocation>
        <location evidence="1">Cytoplasm</location>
    </subcellularLocation>
</comment>
<comment type="similarity">
    <text evidence="1">Belongs to the class-II aminoacyl-tRNA synthetase family.</text>
</comment>
<keyword id="KW-0030">Aminoacyl-tRNA synthetase</keyword>
<keyword id="KW-0067">ATP-binding</keyword>
<keyword id="KW-0963">Cytoplasm</keyword>
<keyword id="KW-0436">Ligase</keyword>
<keyword id="KW-0547">Nucleotide-binding</keyword>
<keyword id="KW-0648">Protein biosynthesis</keyword>
<feature type="chain" id="PRO_0000136128" description="Histidine--tRNA ligase">
    <location>
        <begin position="1"/>
        <end position="428"/>
    </location>
</feature>
<protein>
    <recommendedName>
        <fullName evidence="1">Histidine--tRNA ligase</fullName>
        <ecNumber evidence="1">6.1.1.21</ecNumber>
    </recommendedName>
    <alternativeName>
        <fullName evidence="1">Histidyl-tRNA synthetase</fullName>
        <shortName evidence="1">HisRS</shortName>
    </alternativeName>
</protein>